<accession>Q30NR7</accession>
<proteinExistence type="inferred from homology"/>
<reference key="1">
    <citation type="journal article" date="2008" name="Appl. Environ. Microbiol.">
        <title>Genome of the epsilonproteobacterial chemolithoautotroph Sulfurimonas denitrificans.</title>
        <authorList>
            <person name="Sievert S.M."/>
            <person name="Scott K.M."/>
            <person name="Klotz M.G."/>
            <person name="Chain P.S.G."/>
            <person name="Hauser L.J."/>
            <person name="Hemp J."/>
            <person name="Huegler M."/>
            <person name="Land M."/>
            <person name="Lapidus A."/>
            <person name="Larimer F.W."/>
            <person name="Lucas S."/>
            <person name="Malfatti S.A."/>
            <person name="Meyer F."/>
            <person name="Paulsen I.T."/>
            <person name="Ren Q."/>
            <person name="Simon J."/>
            <person name="Bailey K."/>
            <person name="Diaz E."/>
            <person name="Fitzpatrick K.A."/>
            <person name="Glover B."/>
            <person name="Gwatney N."/>
            <person name="Korajkic A."/>
            <person name="Long A."/>
            <person name="Mobberley J.M."/>
            <person name="Pantry S.N."/>
            <person name="Pazder G."/>
            <person name="Peterson S."/>
            <person name="Quintanilla J.D."/>
            <person name="Sprinkle R."/>
            <person name="Stephens J."/>
            <person name="Thomas P."/>
            <person name="Vaughn R."/>
            <person name="Weber M.J."/>
            <person name="Wooten L.L."/>
        </authorList>
    </citation>
    <scope>NUCLEOTIDE SEQUENCE [LARGE SCALE GENOMIC DNA]</scope>
    <source>
        <strain>ATCC 33889 / DSM 1251</strain>
    </source>
</reference>
<keyword id="KW-0963">Cytoplasm</keyword>
<keyword id="KW-0489">Methyltransferase</keyword>
<keyword id="KW-1185">Reference proteome</keyword>
<keyword id="KW-0694">RNA-binding</keyword>
<keyword id="KW-0698">rRNA processing</keyword>
<keyword id="KW-0949">S-adenosyl-L-methionine</keyword>
<keyword id="KW-0808">Transferase</keyword>
<dbReference type="EC" id="2.1.1.182" evidence="1"/>
<dbReference type="EMBL" id="CP000153">
    <property type="protein sequence ID" value="ABB45364.1"/>
    <property type="molecule type" value="Genomic_DNA"/>
</dbReference>
<dbReference type="RefSeq" id="WP_011373704.1">
    <property type="nucleotide sequence ID" value="NC_007575.1"/>
</dbReference>
<dbReference type="SMR" id="Q30NR7"/>
<dbReference type="STRING" id="326298.Suden_2090"/>
<dbReference type="KEGG" id="tdn:Suden_2090"/>
<dbReference type="eggNOG" id="COG0030">
    <property type="taxonomic scope" value="Bacteria"/>
</dbReference>
<dbReference type="HOGENOM" id="CLU_041220_0_2_7"/>
<dbReference type="OrthoDB" id="9814755at2"/>
<dbReference type="Proteomes" id="UP000002714">
    <property type="component" value="Chromosome"/>
</dbReference>
<dbReference type="GO" id="GO:0005829">
    <property type="term" value="C:cytosol"/>
    <property type="evidence" value="ECO:0007669"/>
    <property type="project" value="TreeGrafter"/>
</dbReference>
<dbReference type="GO" id="GO:0052908">
    <property type="term" value="F:16S rRNA (adenine(1518)-N(6)/adenine(1519)-N(6))-dimethyltransferase activity"/>
    <property type="evidence" value="ECO:0007669"/>
    <property type="project" value="UniProtKB-EC"/>
</dbReference>
<dbReference type="GO" id="GO:0003723">
    <property type="term" value="F:RNA binding"/>
    <property type="evidence" value="ECO:0007669"/>
    <property type="project" value="UniProtKB-KW"/>
</dbReference>
<dbReference type="Gene3D" id="1.10.8.100">
    <property type="entry name" value="Ribosomal RNA adenine dimethylase-like, domain 2"/>
    <property type="match status" value="1"/>
</dbReference>
<dbReference type="Gene3D" id="3.40.50.150">
    <property type="entry name" value="Vaccinia Virus protein VP39"/>
    <property type="match status" value="1"/>
</dbReference>
<dbReference type="HAMAP" id="MF_00607">
    <property type="entry name" value="16SrRNA_methyltr_A"/>
    <property type="match status" value="1"/>
</dbReference>
<dbReference type="InterPro" id="IPR001737">
    <property type="entry name" value="KsgA/Erm"/>
</dbReference>
<dbReference type="InterPro" id="IPR023165">
    <property type="entry name" value="rRNA_Ade_diMease-like_C"/>
</dbReference>
<dbReference type="InterPro" id="IPR020596">
    <property type="entry name" value="rRNA_Ade_Mease_Trfase_CS"/>
</dbReference>
<dbReference type="InterPro" id="IPR020598">
    <property type="entry name" value="rRNA_Ade_methylase_Trfase_N"/>
</dbReference>
<dbReference type="InterPro" id="IPR011530">
    <property type="entry name" value="rRNA_adenine_dimethylase"/>
</dbReference>
<dbReference type="InterPro" id="IPR029063">
    <property type="entry name" value="SAM-dependent_MTases_sf"/>
</dbReference>
<dbReference type="NCBIfam" id="TIGR00755">
    <property type="entry name" value="ksgA"/>
    <property type="match status" value="1"/>
</dbReference>
<dbReference type="PANTHER" id="PTHR11727">
    <property type="entry name" value="DIMETHYLADENOSINE TRANSFERASE"/>
    <property type="match status" value="1"/>
</dbReference>
<dbReference type="PANTHER" id="PTHR11727:SF7">
    <property type="entry name" value="DIMETHYLADENOSINE TRANSFERASE-RELATED"/>
    <property type="match status" value="1"/>
</dbReference>
<dbReference type="Pfam" id="PF00398">
    <property type="entry name" value="RrnaAD"/>
    <property type="match status" value="1"/>
</dbReference>
<dbReference type="SMART" id="SM00650">
    <property type="entry name" value="rADc"/>
    <property type="match status" value="1"/>
</dbReference>
<dbReference type="SUPFAM" id="SSF53335">
    <property type="entry name" value="S-adenosyl-L-methionine-dependent methyltransferases"/>
    <property type="match status" value="1"/>
</dbReference>
<dbReference type="PROSITE" id="PS01131">
    <property type="entry name" value="RRNA_A_DIMETH"/>
    <property type="match status" value="1"/>
</dbReference>
<dbReference type="PROSITE" id="PS51689">
    <property type="entry name" value="SAM_RNA_A_N6_MT"/>
    <property type="match status" value="1"/>
</dbReference>
<protein>
    <recommendedName>
        <fullName evidence="1">Ribosomal RNA small subunit methyltransferase A</fullName>
        <ecNumber evidence="1">2.1.1.182</ecNumber>
    </recommendedName>
    <alternativeName>
        <fullName evidence="1">16S rRNA (adenine(1518)-N(6)/adenine(1519)-N(6))-dimethyltransferase</fullName>
    </alternativeName>
    <alternativeName>
        <fullName evidence="1">16S rRNA dimethyladenosine transferase</fullName>
    </alternativeName>
    <alternativeName>
        <fullName evidence="1">16S rRNA dimethylase</fullName>
    </alternativeName>
    <alternativeName>
        <fullName evidence="1">S-adenosylmethionine-6-N', N'-adenosyl(rRNA) dimethyltransferase</fullName>
    </alternativeName>
</protein>
<gene>
    <name evidence="1" type="primary">rsmA</name>
    <name evidence="1" type="synonym">ksgA</name>
    <name type="ordered locus">Suden_2090</name>
</gene>
<comment type="function">
    <text evidence="1">Specifically dimethylates two adjacent adenosines (A1518 and A1519) in the loop of a conserved hairpin near the 3'-end of 16S rRNA in the 30S particle. May play a critical role in biogenesis of 30S subunits.</text>
</comment>
<comment type="catalytic activity">
    <reaction evidence="1">
        <text>adenosine(1518)/adenosine(1519) in 16S rRNA + 4 S-adenosyl-L-methionine = N(6)-dimethyladenosine(1518)/N(6)-dimethyladenosine(1519) in 16S rRNA + 4 S-adenosyl-L-homocysteine + 4 H(+)</text>
        <dbReference type="Rhea" id="RHEA:19609"/>
        <dbReference type="Rhea" id="RHEA-COMP:10232"/>
        <dbReference type="Rhea" id="RHEA-COMP:10233"/>
        <dbReference type="ChEBI" id="CHEBI:15378"/>
        <dbReference type="ChEBI" id="CHEBI:57856"/>
        <dbReference type="ChEBI" id="CHEBI:59789"/>
        <dbReference type="ChEBI" id="CHEBI:74411"/>
        <dbReference type="ChEBI" id="CHEBI:74493"/>
        <dbReference type="EC" id="2.1.1.182"/>
    </reaction>
</comment>
<comment type="subcellular location">
    <subcellularLocation>
        <location evidence="1">Cytoplasm</location>
    </subcellularLocation>
</comment>
<comment type="similarity">
    <text evidence="1">Belongs to the class I-like SAM-binding methyltransferase superfamily. rRNA adenine N(6)-methyltransferase family. RsmA subfamily.</text>
</comment>
<evidence type="ECO:0000255" key="1">
    <source>
        <dbReference type="HAMAP-Rule" id="MF_00607"/>
    </source>
</evidence>
<sequence length="267" mass="30215">MEKIVAKKKFGQNFLKDESVLQKIIEAMPNNDNKIVEIGPGLGDLTKFLVDVKSVDAFEVDTDLCKVLQNKFEREIATKQLRIHCGDVLTAWKSELIEESYDLVANLPYYIATNIILKALADPKCKNILVMVQLEVAEKFCANDGDKVFGSLSIITQSVGEAHIVVNVPPSAFEPQPKINSAVFLIQKKSDRSDKDFEDMLRVAFTQPRKTLMKNLSSTYDKAMLQEIFEKLSLAQTIRPHQVSTNDYHQLYKLARSLDGTRERTEC</sequence>
<feature type="chain" id="PRO_0000257371" description="Ribosomal RNA small subunit methyltransferase A">
    <location>
        <begin position="1"/>
        <end position="267"/>
    </location>
</feature>
<feature type="binding site" evidence="1">
    <location>
        <position position="13"/>
    </location>
    <ligand>
        <name>S-adenosyl-L-methionine</name>
        <dbReference type="ChEBI" id="CHEBI:59789"/>
    </ligand>
</feature>
<feature type="binding site" evidence="1">
    <location>
        <position position="15"/>
    </location>
    <ligand>
        <name>S-adenosyl-L-methionine</name>
        <dbReference type="ChEBI" id="CHEBI:59789"/>
    </ligand>
</feature>
<feature type="binding site" evidence="1">
    <location>
        <position position="39"/>
    </location>
    <ligand>
        <name>S-adenosyl-L-methionine</name>
        <dbReference type="ChEBI" id="CHEBI:59789"/>
    </ligand>
</feature>
<feature type="binding site" evidence="1">
    <location>
        <position position="59"/>
    </location>
    <ligand>
        <name>S-adenosyl-L-methionine</name>
        <dbReference type="ChEBI" id="CHEBI:59789"/>
    </ligand>
</feature>
<feature type="binding site" evidence="1">
    <location>
        <position position="87"/>
    </location>
    <ligand>
        <name>S-adenosyl-L-methionine</name>
        <dbReference type="ChEBI" id="CHEBI:59789"/>
    </ligand>
</feature>
<feature type="binding site" evidence="1">
    <location>
        <position position="106"/>
    </location>
    <ligand>
        <name>S-adenosyl-L-methionine</name>
        <dbReference type="ChEBI" id="CHEBI:59789"/>
    </ligand>
</feature>
<name>RSMA_SULDN</name>
<organism>
    <name type="scientific">Sulfurimonas denitrificans (strain ATCC 33889 / DSM 1251)</name>
    <name type="common">Thiomicrospira denitrificans (strain ATCC 33889 / DSM 1251)</name>
    <dbReference type="NCBI Taxonomy" id="326298"/>
    <lineage>
        <taxon>Bacteria</taxon>
        <taxon>Pseudomonadati</taxon>
        <taxon>Campylobacterota</taxon>
        <taxon>Epsilonproteobacteria</taxon>
        <taxon>Campylobacterales</taxon>
        <taxon>Sulfurimonadaceae</taxon>
        <taxon>Sulfurimonas</taxon>
    </lineage>
</organism>